<reference key="1">
    <citation type="submission" date="2004-11" db="EMBL/GenBank/DDBJ databases">
        <authorList>
            <consortium name="The German cDNA consortium"/>
        </authorList>
    </citation>
    <scope>NUCLEOTIDE SEQUENCE [LARGE SCALE MRNA]</scope>
    <source>
        <tissue>Brain cortex</tissue>
    </source>
</reference>
<proteinExistence type="evidence at transcript level"/>
<sequence length="284" mass="30843">MCNTPTYCDLGKAAKDVFNKGYGFGMVKIDLKTKSCSGVMEFSTSGHAYTDTGKASGNLETKYKVRNYGLTFTQKWNTDNTLGTEISWENKLAEGLKLTLDTIFVPNTGKKSGKLKASYKRDCFSVGSNVDIDFSGPTIYGWAVLAFEGWLAGYQMSFDTAKSKLSQNNFALGYKAADFQLHTHVNDGTEFGGSIYQKVNEKIETSINLAWTAGSNNTRFGIAAKYMLDCRTSLSAKVNNASLIGLGYTQTLRPGVKLTLSALIDGKNFSAGGHKVGLGFELEA</sequence>
<accession>Q5R7V4</accession>
<comment type="function">
    <text evidence="2 4">Non-selective voltage-gated ion channel that mediates the transport of anions and cations through the mitochondrion outer membrane and plasma membrane. Forms a high-conducting channel with a stable open state and a voltage-induced closure with a mild preference for anions over cations (By similarity). Involved in male fertility and sperm mitochondrial sheath formation (By similarity).</text>
</comment>
<comment type="catalytic activity">
    <reaction evidence="4">
        <text>chloride(in) = chloride(out)</text>
        <dbReference type="Rhea" id="RHEA:29823"/>
        <dbReference type="ChEBI" id="CHEBI:17996"/>
    </reaction>
</comment>
<comment type="catalytic activity">
    <reaction evidence="4">
        <text>K(+)(in) = K(+)(out)</text>
        <dbReference type="Rhea" id="RHEA:29463"/>
        <dbReference type="ChEBI" id="CHEBI:29103"/>
    </reaction>
</comment>
<comment type="subunit">
    <text evidence="2">Interacts with ARMC12 in a TBC1D21-dependent manner. Interacts with MISFA.</text>
</comment>
<comment type="subcellular location">
    <subcellularLocation>
        <location evidence="1">Mitochondrion outer membrane</location>
    </subcellularLocation>
    <subcellularLocation>
        <location evidence="4">Membrane</location>
    </subcellularLocation>
    <text evidence="4">May localize to non-mitochondrial membranes.</text>
</comment>
<comment type="domain">
    <text evidence="1">Consists mainly of a membrane-spanning beta-barrel formed by 19 beta-strands.</text>
</comment>
<comment type="PTM">
    <text evidence="4">Ubiquitinated by PRKN during mitophagy, leading to its degradation and enhancement of mitophagy. Deubiquitinated by USP30.</text>
</comment>
<comment type="similarity">
    <text evidence="5">Belongs to the eukaryotic mitochondrial porin family.</text>
</comment>
<gene>
    <name evidence="4" type="primary">VDAC3</name>
</gene>
<name>VDAC3_PONAB</name>
<evidence type="ECO:0000250" key="1">
    <source>
        <dbReference type="UniProtKB" id="P21796"/>
    </source>
</evidence>
<evidence type="ECO:0000250" key="2">
    <source>
        <dbReference type="UniProtKB" id="Q60931"/>
    </source>
</evidence>
<evidence type="ECO:0000250" key="3">
    <source>
        <dbReference type="UniProtKB" id="Q9R1Z0"/>
    </source>
</evidence>
<evidence type="ECO:0000250" key="4">
    <source>
        <dbReference type="UniProtKB" id="Q9Y277"/>
    </source>
</evidence>
<evidence type="ECO:0000305" key="5"/>
<dbReference type="EMBL" id="CR860005">
    <property type="protein sequence ID" value="CAH92156.1"/>
    <property type="molecule type" value="mRNA"/>
</dbReference>
<dbReference type="RefSeq" id="NP_001127515.1">
    <property type="nucleotide sequence ID" value="NM_001134043.1"/>
</dbReference>
<dbReference type="SMR" id="Q5R7V4"/>
<dbReference type="STRING" id="9601.ENSPPYP00000020808"/>
<dbReference type="GeneID" id="100174591"/>
<dbReference type="KEGG" id="pon:100174591"/>
<dbReference type="CTD" id="7419"/>
<dbReference type="eggNOG" id="KOG3126">
    <property type="taxonomic scope" value="Eukaryota"/>
</dbReference>
<dbReference type="InParanoid" id="Q5R7V4"/>
<dbReference type="OrthoDB" id="7827681at2759"/>
<dbReference type="Proteomes" id="UP000001595">
    <property type="component" value="Unplaced"/>
</dbReference>
<dbReference type="GO" id="GO:0016020">
    <property type="term" value="C:membrane"/>
    <property type="evidence" value="ECO:0000250"/>
    <property type="project" value="UniProtKB"/>
</dbReference>
<dbReference type="GO" id="GO:0005741">
    <property type="term" value="C:mitochondrial outer membrane"/>
    <property type="evidence" value="ECO:0007669"/>
    <property type="project" value="UniProtKB-SubCell"/>
</dbReference>
<dbReference type="GO" id="GO:0046930">
    <property type="term" value="C:pore complex"/>
    <property type="evidence" value="ECO:0007669"/>
    <property type="project" value="UniProtKB-KW"/>
</dbReference>
<dbReference type="GO" id="GO:0000166">
    <property type="term" value="F:nucleotide binding"/>
    <property type="evidence" value="ECO:0007669"/>
    <property type="project" value="UniProtKB-KW"/>
</dbReference>
<dbReference type="GO" id="GO:0015288">
    <property type="term" value="F:porin activity"/>
    <property type="evidence" value="ECO:0007669"/>
    <property type="project" value="UniProtKB-KW"/>
</dbReference>
<dbReference type="GO" id="GO:0008308">
    <property type="term" value="F:voltage-gated monoatomic anion channel activity"/>
    <property type="evidence" value="ECO:0007669"/>
    <property type="project" value="InterPro"/>
</dbReference>
<dbReference type="GO" id="GO:0120317">
    <property type="term" value="P:sperm mitochondrial sheath assembly"/>
    <property type="evidence" value="ECO:0000250"/>
    <property type="project" value="UniProtKB"/>
</dbReference>
<dbReference type="GO" id="GO:0007283">
    <property type="term" value="P:spermatogenesis"/>
    <property type="evidence" value="ECO:0000250"/>
    <property type="project" value="UniProtKB"/>
</dbReference>
<dbReference type="CDD" id="cd07306">
    <property type="entry name" value="Porin3_VDAC"/>
    <property type="match status" value="1"/>
</dbReference>
<dbReference type="FunFam" id="2.40.160.10:FF:000001">
    <property type="entry name" value="Voltage-dependent anion-selective channel protein 2"/>
    <property type="match status" value="1"/>
</dbReference>
<dbReference type="Gene3D" id="2.40.160.10">
    <property type="entry name" value="Porin"/>
    <property type="match status" value="1"/>
</dbReference>
<dbReference type="InterPro" id="IPR023614">
    <property type="entry name" value="Porin_dom_sf"/>
</dbReference>
<dbReference type="InterPro" id="IPR001925">
    <property type="entry name" value="Porin_Euk"/>
</dbReference>
<dbReference type="InterPro" id="IPR027246">
    <property type="entry name" value="Porin_Euk/Tom40"/>
</dbReference>
<dbReference type="PANTHER" id="PTHR11743">
    <property type="entry name" value="VOLTAGE-DEPENDENT ANION-SELECTIVE CHANNEL"/>
    <property type="match status" value="1"/>
</dbReference>
<dbReference type="PANTHER" id="PTHR11743:SF28">
    <property type="entry name" value="VOLTAGE-DEPENDENT ANION-SELECTIVE CHANNEL PROTEIN 3"/>
    <property type="match status" value="1"/>
</dbReference>
<dbReference type="Pfam" id="PF01459">
    <property type="entry name" value="Porin_3"/>
    <property type="match status" value="1"/>
</dbReference>
<dbReference type="PRINTS" id="PR00185">
    <property type="entry name" value="EUKARYTPORIN"/>
</dbReference>
<dbReference type="PROSITE" id="PS00558">
    <property type="entry name" value="EUKARYOTIC_PORIN"/>
    <property type="match status" value="1"/>
</dbReference>
<protein>
    <recommendedName>
        <fullName evidence="4">Non-selective voltage-gated ion channel VDAC3</fullName>
        <shortName>VDAC-3</shortName>
    </recommendedName>
</protein>
<feature type="initiator methionine" description="Removed" evidence="4">
    <location>
        <position position="1"/>
    </location>
</feature>
<feature type="chain" id="PRO_0000050515" description="Non-selective voltage-gated ion channel VDAC3">
    <location>
        <begin position="2"/>
        <end position="284"/>
    </location>
</feature>
<feature type="transmembrane region" description="Beta stranded" evidence="1">
    <location>
        <begin position="26"/>
        <end position="35"/>
    </location>
</feature>
<feature type="transmembrane region" description="Beta stranded" evidence="1">
    <location>
        <begin position="39"/>
        <end position="48"/>
    </location>
</feature>
<feature type="transmembrane region" description="Beta stranded" evidence="1">
    <location>
        <begin position="55"/>
        <end position="65"/>
    </location>
</feature>
<feature type="transmembrane region" description="Beta stranded" evidence="1">
    <location>
        <begin position="70"/>
        <end position="77"/>
    </location>
</feature>
<feature type="transmembrane region" description="Beta stranded" evidence="1">
    <location>
        <begin position="81"/>
        <end position="90"/>
    </location>
</feature>
<feature type="transmembrane region" description="Beta stranded" evidence="1">
    <location>
        <begin position="96"/>
        <end position="105"/>
    </location>
</feature>
<feature type="transmembrane region" description="Beta stranded" evidence="1">
    <location>
        <begin position="112"/>
        <end position="121"/>
    </location>
</feature>
<feature type="transmembrane region" description="Beta stranded" evidence="1">
    <location>
        <begin position="124"/>
        <end position="131"/>
    </location>
</feature>
<feature type="transmembrane region" description="Beta stranded" evidence="1">
    <location>
        <begin position="138"/>
        <end position="146"/>
    </location>
</feature>
<feature type="transmembrane region" description="Beta stranded" evidence="1">
    <location>
        <begin position="151"/>
        <end position="159"/>
    </location>
</feature>
<feature type="transmembrane region" description="Beta stranded" evidence="1">
    <location>
        <begin position="164"/>
        <end position="176"/>
    </location>
</feature>
<feature type="transmembrane region" description="Beta stranded" evidence="1">
    <location>
        <begin position="179"/>
        <end position="186"/>
    </location>
</feature>
<feature type="transmembrane region" description="Beta stranded" evidence="1">
    <location>
        <begin position="190"/>
        <end position="199"/>
    </location>
</feature>
<feature type="transmembrane region" description="Beta stranded" evidence="1">
    <location>
        <begin position="203"/>
        <end position="212"/>
    </location>
</feature>
<feature type="transmembrane region" description="Beta stranded" evidence="1">
    <location>
        <begin position="219"/>
        <end position="228"/>
    </location>
</feature>
<feature type="transmembrane region" description="Beta stranded" evidence="1">
    <location>
        <begin position="232"/>
        <end position="239"/>
    </location>
</feature>
<feature type="transmembrane region" description="Beta stranded" evidence="1">
    <location>
        <begin position="243"/>
        <end position="252"/>
    </location>
</feature>
<feature type="transmembrane region" description="Beta stranded" evidence="1">
    <location>
        <begin position="255"/>
        <end position="264"/>
    </location>
</feature>
<feature type="transmembrane region" description="Beta stranded" evidence="1">
    <location>
        <begin position="274"/>
        <end position="283"/>
    </location>
</feature>
<feature type="binding site" evidence="1">
    <location>
        <begin position="243"/>
        <end position="245"/>
    </location>
    <ligand>
        <name>NAD(+)</name>
        <dbReference type="ChEBI" id="CHEBI:57540"/>
    </ligand>
</feature>
<feature type="binding site" evidence="1">
    <location>
        <begin position="261"/>
        <end position="265"/>
    </location>
    <ligand>
        <name>NAD(+)</name>
        <dbReference type="ChEBI" id="CHEBI:57540"/>
    </ligand>
</feature>
<feature type="modified residue" description="N-acetylcysteine" evidence="4">
    <location>
        <position position="2"/>
    </location>
</feature>
<feature type="modified residue" description="Phosphothreonine" evidence="4">
    <location>
        <position position="4"/>
    </location>
</feature>
<feature type="modified residue" description="N6-acetyllysine" evidence="2">
    <location>
        <position position="12"/>
    </location>
</feature>
<feature type="modified residue" description="N6-acetyllysine" evidence="2">
    <location>
        <position position="15"/>
    </location>
</feature>
<feature type="modified residue" description="N6-acetyllysine" evidence="4">
    <location>
        <position position="20"/>
    </location>
</feature>
<feature type="modified residue" description="N6-acetyllysine" evidence="4">
    <location>
        <position position="91"/>
    </location>
</feature>
<feature type="modified residue" description="Phosphoserine" evidence="3">
    <location>
        <position position="242"/>
    </location>
</feature>
<feature type="modified residue" description="N6-acetyllysine; alternate" evidence="2">
    <location>
        <position position="267"/>
    </location>
</feature>
<feature type="cross-link" description="Glycyl lysine isopeptide (Lys-Gly) (interchain with G-Cter in ubiquitin)" evidence="4">
    <location>
        <position position="54"/>
    </location>
</feature>
<feature type="cross-link" description="Glycyl lysine isopeptide (Lys-Gly) (interchain with G-Cter in ubiquitin)" evidence="4">
    <location>
        <position position="110"/>
    </location>
</feature>
<feature type="cross-link" description="Glycyl lysine isopeptide (Lys-Gly) (interchain with G-Cter in ubiquitin)" evidence="4">
    <location>
        <position position="111"/>
    </location>
</feature>
<feature type="cross-link" description="Glycyl lysine isopeptide (Lys-Gly) (interchain with G-Cter in ubiquitin); alternate" evidence="4">
    <location>
        <position position="267"/>
    </location>
</feature>
<keyword id="KW-0007">Acetylation</keyword>
<keyword id="KW-0406">Ion transport</keyword>
<keyword id="KW-1017">Isopeptide bond</keyword>
<keyword id="KW-0472">Membrane</keyword>
<keyword id="KW-0496">Mitochondrion</keyword>
<keyword id="KW-1000">Mitochondrion outer membrane</keyword>
<keyword id="KW-0520">NAD</keyword>
<keyword id="KW-0547">Nucleotide-binding</keyword>
<keyword id="KW-0597">Phosphoprotein</keyword>
<keyword id="KW-0626">Porin</keyword>
<keyword id="KW-1185">Reference proteome</keyword>
<keyword id="KW-0812">Transmembrane</keyword>
<keyword id="KW-1134">Transmembrane beta strand</keyword>
<keyword id="KW-0813">Transport</keyword>
<keyword id="KW-0832">Ubl conjugation</keyword>
<organism>
    <name type="scientific">Pongo abelii</name>
    <name type="common">Sumatran orangutan</name>
    <name type="synonym">Pongo pygmaeus abelii</name>
    <dbReference type="NCBI Taxonomy" id="9601"/>
    <lineage>
        <taxon>Eukaryota</taxon>
        <taxon>Metazoa</taxon>
        <taxon>Chordata</taxon>
        <taxon>Craniata</taxon>
        <taxon>Vertebrata</taxon>
        <taxon>Euteleostomi</taxon>
        <taxon>Mammalia</taxon>
        <taxon>Eutheria</taxon>
        <taxon>Euarchontoglires</taxon>
        <taxon>Primates</taxon>
        <taxon>Haplorrhini</taxon>
        <taxon>Catarrhini</taxon>
        <taxon>Hominidae</taxon>
        <taxon>Pongo</taxon>
    </lineage>
</organism>